<name>ETR1_PELHO</name>
<protein>
    <recommendedName>
        <fullName>Ethylene receptor 1</fullName>
        <ecNumber>2.7.13.3</ecNumber>
    </recommendedName>
    <alternativeName>
        <fullName>PhETR1</fullName>
    </alternativeName>
</protein>
<accession>Q9XH58</accession>
<dbReference type="EC" id="2.7.13.3"/>
<dbReference type="EMBL" id="AF141928">
    <property type="protein sequence ID" value="AAD37576.1"/>
    <property type="molecule type" value="mRNA"/>
</dbReference>
<dbReference type="SMR" id="Q9XH58"/>
<dbReference type="BRENDA" id="2.7.13.3">
    <property type="organism ID" value="4583"/>
</dbReference>
<dbReference type="GO" id="GO:0005789">
    <property type="term" value="C:endoplasmic reticulum membrane"/>
    <property type="evidence" value="ECO:0007669"/>
    <property type="project" value="UniProtKB-SubCell"/>
</dbReference>
<dbReference type="GO" id="GO:0005524">
    <property type="term" value="F:ATP binding"/>
    <property type="evidence" value="ECO:0007669"/>
    <property type="project" value="UniProtKB-KW"/>
</dbReference>
<dbReference type="GO" id="GO:0051740">
    <property type="term" value="F:ethylene binding"/>
    <property type="evidence" value="ECO:0007669"/>
    <property type="project" value="InterPro"/>
</dbReference>
<dbReference type="GO" id="GO:0038199">
    <property type="term" value="F:ethylene receptor activity"/>
    <property type="evidence" value="ECO:0007669"/>
    <property type="project" value="InterPro"/>
</dbReference>
<dbReference type="GO" id="GO:0046872">
    <property type="term" value="F:metal ion binding"/>
    <property type="evidence" value="ECO:0007669"/>
    <property type="project" value="UniProtKB-KW"/>
</dbReference>
<dbReference type="GO" id="GO:0000155">
    <property type="term" value="F:phosphorelay sensor kinase activity"/>
    <property type="evidence" value="ECO:0007669"/>
    <property type="project" value="InterPro"/>
</dbReference>
<dbReference type="GO" id="GO:0010105">
    <property type="term" value="P:negative regulation of ethylene-activated signaling pathway"/>
    <property type="evidence" value="ECO:0007669"/>
    <property type="project" value="UniProtKB-ARBA"/>
</dbReference>
<dbReference type="CDD" id="cd00082">
    <property type="entry name" value="HisKA"/>
    <property type="match status" value="1"/>
</dbReference>
<dbReference type="CDD" id="cd19933">
    <property type="entry name" value="REC_ETR-like"/>
    <property type="match status" value="1"/>
</dbReference>
<dbReference type="FunFam" id="3.40.50.2300:FF:000192">
    <property type="entry name" value="Ethylene receptor"/>
    <property type="match status" value="1"/>
</dbReference>
<dbReference type="FunFam" id="1.10.287.130:FF:000004">
    <property type="entry name" value="Ethylene receptor 1"/>
    <property type="match status" value="1"/>
</dbReference>
<dbReference type="FunFam" id="3.30.565.10:FF:000030">
    <property type="entry name" value="Ethylene receptor 1"/>
    <property type="match status" value="1"/>
</dbReference>
<dbReference type="FunFam" id="3.30.450.40:FF:000026">
    <property type="entry name" value="Ethylene response sensor"/>
    <property type="match status" value="1"/>
</dbReference>
<dbReference type="Gene3D" id="1.10.287.130">
    <property type="match status" value="1"/>
</dbReference>
<dbReference type="Gene3D" id="3.30.450.40">
    <property type="match status" value="1"/>
</dbReference>
<dbReference type="Gene3D" id="3.40.50.2300">
    <property type="match status" value="1"/>
</dbReference>
<dbReference type="Gene3D" id="3.30.565.10">
    <property type="entry name" value="Histidine kinase-like ATPase, C-terminal domain"/>
    <property type="match status" value="1"/>
</dbReference>
<dbReference type="InterPro" id="IPR011006">
    <property type="entry name" value="CheY-like_superfamily"/>
</dbReference>
<dbReference type="InterPro" id="IPR014525">
    <property type="entry name" value="ETR"/>
</dbReference>
<dbReference type="InterPro" id="IPR003018">
    <property type="entry name" value="GAF"/>
</dbReference>
<dbReference type="InterPro" id="IPR029016">
    <property type="entry name" value="GAF-like_dom_sf"/>
</dbReference>
<dbReference type="InterPro" id="IPR036890">
    <property type="entry name" value="HATPase_C_sf"/>
</dbReference>
<dbReference type="InterPro" id="IPR005467">
    <property type="entry name" value="His_kinase_dom"/>
</dbReference>
<dbReference type="InterPro" id="IPR003661">
    <property type="entry name" value="HisK_dim/P_dom"/>
</dbReference>
<dbReference type="InterPro" id="IPR036097">
    <property type="entry name" value="HisK_dim/P_sf"/>
</dbReference>
<dbReference type="InterPro" id="IPR004358">
    <property type="entry name" value="Sig_transdc_His_kin-like_C"/>
</dbReference>
<dbReference type="InterPro" id="IPR001789">
    <property type="entry name" value="Sig_transdc_resp-reg_receiver"/>
</dbReference>
<dbReference type="PANTHER" id="PTHR24423:SF615">
    <property type="entry name" value="ETHYLENE RECEPTOR 1"/>
    <property type="match status" value="1"/>
</dbReference>
<dbReference type="PANTHER" id="PTHR24423">
    <property type="entry name" value="TWO-COMPONENT SENSOR HISTIDINE KINASE"/>
    <property type="match status" value="1"/>
</dbReference>
<dbReference type="Pfam" id="PF25487">
    <property type="entry name" value="ETR1_N"/>
    <property type="match status" value="1"/>
</dbReference>
<dbReference type="Pfam" id="PF01590">
    <property type="entry name" value="GAF"/>
    <property type="match status" value="1"/>
</dbReference>
<dbReference type="Pfam" id="PF02518">
    <property type="entry name" value="HATPase_c"/>
    <property type="match status" value="1"/>
</dbReference>
<dbReference type="Pfam" id="PF00512">
    <property type="entry name" value="HisKA"/>
    <property type="match status" value="1"/>
</dbReference>
<dbReference type="Pfam" id="PF00072">
    <property type="entry name" value="Response_reg"/>
    <property type="match status" value="1"/>
</dbReference>
<dbReference type="PIRSF" id="PIRSF026389">
    <property type="entry name" value="Ethyln_sen_HK"/>
    <property type="match status" value="1"/>
</dbReference>
<dbReference type="PRINTS" id="PR00344">
    <property type="entry name" value="BCTRLSENSOR"/>
</dbReference>
<dbReference type="SMART" id="SM00065">
    <property type="entry name" value="GAF"/>
    <property type="match status" value="1"/>
</dbReference>
<dbReference type="SMART" id="SM00387">
    <property type="entry name" value="HATPase_c"/>
    <property type="match status" value="1"/>
</dbReference>
<dbReference type="SMART" id="SM00388">
    <property type="entry name" value="HisKA"/>
    <property type="match status" value="1"/>
</dbReference>
<dbReference type="SMART" id="SM00448">
    <property type="entry name" value="REC"/>
    <property type="match status" value="1"/>
</dbReference>
<dbReference type="SUPFAM" id="SSF55874">
    <property type="entry name" value="ATPase domain of HSP90 chaperone/DNA topoisomerase II/histidine kinase"/>
    <property type="match status" value="1"/>
</dbReference>
<dbReference type="SUPFAM" id="SSF52172">
    <property type="entry name" value="CheY-like"/>
    <property type="match status" value="1"/>
</dbReference>
<dbReference type="SUPFAM" id="SSF55781">
    <property type="entry name" value="GAF domain-like"/>
    <property type="match status" value="1"/>
</dbReference>
<dbReference type="SUPFAM" id="SSF47384">
    <property type="entry name" value="Homodimeric domain of signal transducing histidine kinase"/>
    <property type="match status" value="1"/>
</dbReference>
<dbReference type="PROSITE" id="PS50109">
    <property type="entry name" value="HIS_KIN"/>
    <property type="match status" value="1"/>
</dbReference>
<dbReference type="PROSITE" id="PS50110">
    <property type="entry name" value="RESPONSE_REGULATORY"/>
    <property type="match status" value="1"/>
</dbReference>
<feature type="chain" id="PRO_0000081420" description="Ethylene receptor 1">
    <location>
        <begin position="1"/>
        <end position="740"/>
    </location>
</feature>
<feature type="transmembrane region" description="Helical" evidence="2">
    <location>
        <begin position="23"/>
        <end position="43"/>
    </location>
</feature>
<feature type="transmembrane region" description="Helical" evidence="2">
    <location>
        <begin position="53"/>
        <end position="73"/>
    </location>
</feature>
<feature type="transmembrane region" description="Helical" evidence="2">
    <location>
        <begin position="95"/>
        <end position="115"/>
    </location>
</feature>
<feature type="domain" description="GAF">
    <location>
        <begin position="158"/>
        <end position="307"/>
    </location>
</feature>
<feature type="domain" description="Histidine kinase" evidence="3">
    <location>
        <begin position="350"/>
        <end position="587"/>
    </location>
</feature>
<feature type="domain" description="Response regulatory" evidence="4">
    <location>
        <begin position="615"/>
        <end position="732"/>
    </location>
</feature>
<feature type="binding site" evidence="1">
    <location>
        <position position="65"/>
    </location>
    <ligand>
        <name>Cu cation</name>
        <dbReference type="ChEBI" id="CHEBI:23378"/>
    </ligand>
</feature>
<feature type="binding site" evidence="1">
    <location>
        <position position="69"/>
    </location>
    <ligand>
        <name>Cu cation</name>
        <dbReference type="ChEBI" id="CHEBI:23378"/>
    </ligand>
</feature>
<feature type="modified residue" description="Phosphohistidine; by autocatalysis" evidence="3">
    <location>
        <position position="353"/>
    </location>
</feature>
<feature type="modified residue" description="4-aspartylphosphate" evidence="4">
    <location>
        <position position="663"/>
    </location>
</feature>
<feature type="disulfide bond" description="Interchain" evidence="1">
    <location>
        <position position="4"/>
    </location>
</feature>
<feature type="disulfide bond" description="Interchain" evidence="1">
    <location>
        <position position="6"/>
    </location>
</feature>
<comment type="function">
    <text evidence="1">May act early in the ethylene signal transduction pathway, possibly as an ethylene receptor, or as a regulator of the pathway.</text>
</comment>
<comment type="catalytic activity">
    <reaction>
        <text>ATP + protein L-histidine = ADP + protein N-phospho-L-histidine.</text>
        <dbReference type="EC" id="2.7.13.3"/>
    </reaction>
</comment>
<comment type="cofactor">
    <cofactor evidence="1">
        <name>Cu cation</name>
        <dbReference type="ChEBI" id="CHEBI:23378"/>
    </cofactor>
    <text evidence="1">Binds 1 copper ion per dimer.</text>
</comment>
<comment type="subunit">
    <text evidence="1">Homodimer; disulfide-linked.</text>
</comment>
<comment type="subcellular location">
    <subcellularLocation>
        <location evidence="1">Endoplasmic reticulum membrane</location>
        <topology evidence="1">Multi-pass membrane protein</topology>
    </subcellularLocation>
</comment>
<comment type="developmental stage">
    <text>Constant expression throughout floral development.</text>
</comment>
<comment type="induction">
    <text>Not induced by ethylene.</text>
</comment>
<comment type="PTM">
    <text evidence="1">Activation probably requires a transfer of a phosphate group between a His in the transmitter domain and an Asp of the receiver domain.</text>
</comment>
<comment type="similarity">
    <text evidence="5">Belongs to the ethylene receptor family.</text>
</comment>
<keyword id="KW-0067">ATP-binding</keyword>
<keyword id="KW-0186">Copper</keyword>
<keyword id="KW-1015">Disulfide bond</keyword>
<keyword id="KW-0256">Endoplasmic reticulum</keyword>
<keyword id="KW-0936">Ethylene signaling pathway</keyword>
<keyword id="KW-0418">Kinase</keyword>
<keyword id="KW-0472">Membrane</keyword>
<keyword id="KW-0479">Metal-binding</keyword>
<keyword id="KW-0547">Nucleotide-binding</keyword>
<keyword id="KW-0597">Phosphoprotein</keyword>
<keyword id="KW-0675">Receptor</keyword>
<keyword id="KW-0808">Transferase</keyword>
<keyword id="KW-0812">Transmembrane</keyword>
<keyword id="KW-1133">Transmembrane helix</keyword>
<keyword id="KW-0902">Two-component regulatory system</keyword>
<organism>
    <name type="scientific">Pelargonium hortorum</name>
    <name type="common">Common geranium</name>
    <name type="synonym">Pelargonium inquinans x Pelargonium zonale</name>
    <dbReference type="NCBI Taxonomy" id="4031"/>
    <lineage>
        <taxon>Eukaryota</taxon>
        <taxon>Viridiplantae</taxon>
        <taxon>Streptophyta</taxon>
        <taxon>Embryophyta</taxon>
        <taxon>Tracheophyta</taxon>
        <taxon>Spermatophyta</taxon>
        <taxon>Magnoliopsida</taxon>
        <taxon>eudicotyledons</taxon>
        <taxon>Gunneridae</taxon>
        <taxon>Pentapetalae</taxon>
        <taxon>rosids</taxon>
        <taxon>malvids</taxon>
        <taxon>Geraniales</taxon>
        <taxon>Geraniaceae</taxon>
        <taxon>Pelargonium</taxon>
    </lineage>
</organism>
<gene>
    <name type="primary">ETR1</name>
</gene>
<sequence>MEACNCFEPQWPADDLLMKYQYISDFFIAVAYFSIPLELIYFVKKSAVFPYKWVLVQFGAFIVLCGATHLINLWTFNLHTRTVEIVMTTAKLMTAAVSCVTALMLVHIIPDLLSVKTRELFLKNKAAELDREMGLIRTQEETGRHVRMLTHEIRSTLDRHTILKTTLVELGRTLGLEECALWMPTRTGLELQLSHTLRQQNPVGYTVPIHLPVLNQVFSSNRAIKISPNSPIARLRPLAGKYVPGEVVAVRVPLLHLSNFQINDWPELSTKRYAMMVLMLPSDSARQWHVHELELVEVVADQVAVALSHAAILEESMRARDLLMEQNVALDMARREAETAIRARNDFLAVMNHEMRTPMHAIIALSSLLQETDLTSEQRLMVETILKSSNLLATLINDVLDLSRLEDGSLQLDIATFNLHAVFRQVFNLIKPIASVKKLFITLNVSPDLPEYVIGDEKRLVQIMLNVVGNAVKFSKEGIISVTAFVAKSESVRDPRAPDFFPVSSDNQFYMRVQVKDSGSGINPQDMPKLFTKFAQSQPVATKNSGGSGLGLAISKRFVNLMDGHIWIDSEGPSKGCTVTFVVKLGIPEGSNEPKLPLMPKVSANNSQTDFPGLKVLLMDENGISRMVTKGLLMHLGCDVTSVSSSEECLRMVSQDHKVVFMDVRVPGLDGHELAVRIHEKFMKRHERPLIVALTSNADKVTKENCLRVGMEGVILKPVSVDKMRNVLSKLLEHRILFEA</sequence>
<proteinExistence type="evidence at transcript level"/>
<evidence type="ECO:0000250" key="1"/>
<evidence type="ECO:0000255" key="2"/>
<evidence type="ECO:0000255" key="3">
    <source>
        <dbReference type="PROSITE-ProRule" id="PRU00107"/>
    </source>
</evidence>
<evidence type="ECO:0000255" key="4">
    <source>
        <dbReference type="PROSITE-ProRule" id="PRU00169"/>
    </source>
</evidence>
<evidence type="ECO:0000305" key="5"/>
<reference key="1">
    <citation type="journal article" date="2000" name="Plant Mol. Biol.">
        <title>Effect of pollination and exogenous ethylene on accumulation of ETR1 homologue transcripts during flower petal abscission in geranium (Pelargonium x hortorum L.H. Bailey).</title>
        <authorList>
            <person name="Dervinis C."/>
            <person name="Clark D.G."/>
            <person name="Barrett J.E."/>
            <person name="Nell T.A."/>
        </authorList>
    </citation>
    <scope>NUCLEOTIDE SEQUENCE [MRNA]</scope>
</reference>